<feature type="chain" id="PRO_0000109704" description="Glutamate 5-kinase">
    <location>
        <begin position="1"/>
        <end position="378"/>
    </location>
</feature>
<feature type="domain" description="PUA" evidence="1">
    <location>
        <begin position="286"/>
        <end position="364"/>
    </location>
</feature>
<feature type="binding site" evidence="1">
    <location>
        <position position="20"/>
    </location>
    <ligand>
        <name>ATP</name>
        <dbReference type="ChEBI" id="CHEBI:30616"/>
    </ligand>
</feature>
<feature type="binding site" evidence="1">
    <location>
        <position position="60"/>
    </location>
    <ligand>
        <name>substrate</name>
    </ligand>
</feature>
<feature type="binding site" evidence="1">
    <location>
        <position position="147"/>
    </location>
    <ligand>
        <name>substrate</name>
    </ligand>
</feature>
<feature type="binding site" evidence="1">
    <location>
        <position position="159"/>
    </location>
    <ligand>
        <name>substrate</name>
    </ligand>
</feature>
<feature type="binding site" evidence="1">
    <location>
        <begin position="179"/>
        <end position="180"/>
    </location>
    <ligand>
        <name>ATP</name>
        <dbReference type="ChEBI" id="CHEBI:30616"/>
    </ligand>
</feature>
<feature type="binding site" evidence="1">
    <location>
        <begin position="221"/>
        <end position="227"/>
    </location>
    <ligand>
        <name>ATP</name>
        <dbReference type="ChEBI" id="CHEBI:30616"/>
    </ligand>
</feature>
<accession>Q6LTX3</accession>
<comment type="function">
    <text evidence="1">Catalyzes the transfer of a phosphate group to glutamate to form L-glutamate 5-phosphate.</text>
</comment>
<comment type="catalytic activity">
    <reaction evidence="1">
        <text>L-glutamate + ATP = L-glutamyl 5-phosphate + ADP</text>
        <dbReference type="Rhea" id="RHEA:14877"/>
        <dbReference type="ChEBI" id="CHEBI:29985"/>
        <dbReference type="ChEBI" id="CHEBI:30616"/>
        <dbReference type="ChEBI" id="CHEBI:58274"/>
        <dbReference type="ChEBI" id="CHEBI:456216"/>
        <dbReference type="EC" id="2.7.2.11"/>
    </reaction>
</comment>
<comment type="pathway">
    <text evidence="1">Amino-acid biosynthesis; L-proline biosynthesis; L-glutamate 5-semialdehyde from L-glutamate: step 1/2.</text>
</comment>
<comment type="subcellular location">
    <subcellularLocation>
        <location evidence="1">Cytoplasm</location>
    </subcellularLocation>
</comment>
<comment type="similarity">
    <text evidence="1">Belongs to the glutamate 5-kinase family.</text>
</comment>
<keyword id="KW-0028">Amino-acid biosynthesis</keyword>
<keyword id="KW-0067">ATP-binding</keyword>
<keyword id="KW-0963">Cytoplasm</keyword>
<keyword id="KW-0418">Kinase</keyword>
<keyword id="KW-0547">Nucleotide-binding</keyword>
<keyword id="KW-0641">Proline biosynthesis</keyword>
<keyword id="KW-1185">Reference proteome</keyword>
<keyword id="KW-0808">Transferase</keyword>
<reference key="1">
    <citation type="journal article" date="2005" name="Science">
        <title>Life at depth: Photobacterium profundum genome sequence and expression analysis.</title>
        <authorList>
            <person name="Vezzi A."/>
            <person name="Campanaro S."/>
            <person name="D'Angelo M."/>
            <person name="Simonato F."/>
            <person name="Vitulo N."/>
            <person name="Lauro F.M."/>
            <person name="Cestaro A."/>
            <person name="Malacrida G."/>
            <person name="Simionati B."/>
            <person name="Cannata N."/>
            <person name="Romualdi C."/>
            <person name="Bartlett D.H."/>
            <person name="Valle G."/>
        </authorList>
    </citation>
    <scope>NUCLEOTIDE SEQUENCE [LARGE SCALE GENOMIC DNA]</scope>
    <source>
        <strain>ATCC BAA-1253 / SS9</strain>
    </source>
</reference>
<name>PROB_PHOPR</name>
<proteinExistence type="inferred from homology"/>
<dbReference type="EC" id="2.7.2.11" evidence="1"/>
<dbReference type="EMBL" id="CR378665">
    <property type="protein sequence ID" value="CAG19252.1"/>
    <property type="molecule type" value="Genomic_DNA"/>
</dbReference>
<dbReference type="RefSeq" id="WP_011217589.1">
    <property type="nucleotide sequence ID" value="NC_006370.1"/>
</dbReference>
<dbReference type="SMR" id="Q6LTX3"/>
<dbReference type="STRING" id="298386.PBPRA0839"/>
<dbReference type="KEGG" id="ppr:PBPRA0839"/>
<dbReference type="eggNOG" id="COG0263">
    <property type="taxonomic scope" value="Bacteria"/>
</dbReference>
<dbReference type="HOGENOM" id="CLU_025400_2_0_6"/>
<dbReference type="UniPathway" id="UPA00098">
    <property type="reaction ID" value="UER00359"/>
</dbReference>
<dbReference type="Proteomes" id="UP000000593">
    <property type="component" value="Chromosome 1"/>
</dbReference>
<dbReference type="GO" id="GO:0005829">
    <property type="term" value="C:cytosol"/>
    <property type="evidence" value="ECO:0007669"/>
    <property type="project" value="TreeGrafter"/>
</dbReference>
<dbReference type="GO" id="GO:0005524">
    <property type="term" value="F:ATP binding"/>
    <property type="evidence" value="ECO:0007669"/>
    <property type="project" value="UniProtKB-KW"/>
</dbReference>
<dbReference type="GO" id="GO:0004349">
    <property type="term" value="F:glutamate 5-kinase activity"/>
    <property type="evidence" value="ECO:0007669"/>
    <property type="project" value="UniProtKB-UniRule"/>
</dbReference>
<dbReference type="GO" id="GO:0003723">
    <property type="term" value="F:RNA binding"/>
    <property type="evidence" value="ECO:0007669"/>
    <property type="project" value="InterPro"/>
</dbReference>
<dbReference type="GO" id="GO:0055129">
    <property type="term" value="P:L-proline biosynthetic process"/>
    <property type="evidence" value="ECO:0007669"/>
    <property type="project" value="UniProtKB-UniRule"/>
</dbReference>
<dbReference type="CDD" id="cd04242">
    <property type="entry name" value="AAK_G5K_ProB"/>
    <property type="match status" value="1"/>
</dbReference>
<dbReference type="CDD" id="cd21157">
    <property type="entry name" value="PUA_G5K"/>
    <property type="match status" value="1"/>
</dbReference>
<dbReference type="FunFam" id="2.30.130.10:FF:000003">
    <property type="entry name" value="Glutamate 5-kinase"/>
    <property type="match status" value="1"/>
</dbReference>
<dbReference type="FunFam" id="3.40.1160.10:FF:000006">
    <property type="entry name" value="Glutamate 5-kinase"/>
    <property type="match status" value="1"/>
</dbReference>
<dbReference type="Gene3D" id="3.40.1160.10">
    <property type="entry name" value="Acetylglutamate kinase-like"/>
    <property type="match status" value="2"/>
</dbReference>
<dbReference type="Gene3D" id="2.30.130.10">
    <property type="entry name" value="PUA domain"/>
    <property type="match status" value="1"/>
</dbReference>
<dbReference type="HAMAP" id="MF_00456">
    <property type="entry name" value="ProB"/>
    <property type="match status" value="1"/>
</dbReference>
<dbReference type="InterPro" id="IPR036393">
    <property type="entry name" value="AceGlu_kinase-like_sf"/>
</dbReference>
<dbReference type="InterPro" id="IPR001048">
    <property type="entry name" value="Asp/Glu/Uridylate_kinase"/>
</dbReference>
<dbReference type="InterPro" id="IPR041739">
    <property type="entry name" value="G5K_ProB"/>
</dbReference>
<dbReference type="InterPro" id="IPR001057">
    <property type="entry name" value="Glu/AcGlu_kinase"/>
</dbReference>
<dbReference type="InterPro" id="IPR011529">
    <property type="entry name" value="Glu_5kinase"/>
</dbReference>
<dbReference type="InterPro" id="IPR005715">
    <property type="entry name" value="Glu_5kinase/COase_Synthase"/>
</dbReference>
<dbReference type="InterPro" id="IPR019797">
    <property type="entry name" value="Glutamate_5-kinase_CS"/>
</dbReference>
<dbReference type="InterPro" id="IPR002478">
    <property type="entry name" value="PUA"/>
</dbReference>
<dbReference type="InterPro" id="IPR015947">
    <property type="entry name" value="PUA-like_sf"/>
</dbReference>
<dbReference type="InterPro" id="IPR036974">
    <property type="entry name" value="PUA_sf"/>
</dbReference>
<dbReference type="NCBIfam" id="TIGR01027">
    <property type="entry name" value="proB"/>
    <property type="match status" value="1"/>
</dbReference>
<dbReference type="PANTHER" id="PTHR43654">
    <property type="entry name" value="GLUTAMATE 5-KINASE"/>
    <property type="match status" value="1"/>
</dbReference>
<dbReference type="PANTHER" id="PTHR43654:SF1">
    <property type="entry name" value="ISOPENTENYL PHOSPHATE KINASE"/>
    <property type="match status" value="1"/>
</dbReference>
<dbReference type="Pfam" id="PF00696">
    <property type="entry name" value="AA_kinase"/>
    <property type="match status" value="1"/>
</dbReference>
<dbReference type="Pfam" id="PF01472">
    <property type="entry name" value="PUA"/>
    <property type="match status" value="1"/>
</dbReference>
<dbReference type="PIRSF" id="PIRSF000729">
    <property type="entry name" value="GK"/>
    <property type="match status" value="1"/>
</dbReference>
<dbReference type="PRINTS" id="PR00474">
    <property type="entry name" value="GLU5KINASE"/>
</dbReference>
<dbReference type="SMART" id="SM00359">
    <property type="entry name" value="PUA"/>
    <property type="match status" value="1"/>
</dbReference>
<dbReference type="SUPFAM" id="SSF53633">
    <property type="entry name" value="Carbamate kinase-like"/>
    <property type="match status" value="1"/>
</dbReference>
<dbReference type="SUPFAM" id="SSF88697">
    <property type="entry name" value="PUA domain-like"/>
    <property type="match status" value="1"/>
</dbReference>
<dbReference type="PROSITE" id="PS00902">
    <property type="entry name" value="GLUTAMATE_5_KINASE"/>
    <property type="match status" value="1"/>
</dbReference>
<dbReference type="PROSITE" id="PS50890">
    <property type="entry name" value="PUA"/>
    <property type="match status" value="1"/>
</dbReference>
<organism>
    <name type="scientific">Photobacterium profundum (strain SS9)</name>
    <dbReference type="NCBI Taxonomy" id="298386"/>
    <lineage>
        <taxon>Bacteria</taxon>
        <taxon>Pseudomonadati</taxon>
        <taxon>Pseudomonadota</taxon>
        <taxon>Gammaproteobacteria</taxon>
        <taxon>Vibrionales</taxon>
        <taxon>Vibrionaceae</taxon>
        <taxon>Photobacterium</taxon>
    </lineage>
</organism>
<protein>
    <recommendedName>
        <fullName evidence="1">Glutamate 5-kinase</fullName>
        <ecNumber evidence="1">2.7.2.11</ecNumber>
    </recommendedName>
    <alternativeName>
        <fullName evidence="1">Gamma-glutamyl kinase</fullName>
        <shortName evidence="1">GK</shortName>
    </alternativeName>
</protein>
<gene>
    <name evidence="1" type="primary">proB</name>
    <name type="ordered locus">PBPRA0839</name>
</gene>
<sequence>MTPPLSDKQTLPPKQTIVVKLGTSVLTGGTLKLDRAHMVELVRQCAYLRRYGHKVIIVTSGAIAAGREHLDYPELPKTMASKQLLAAVGQSRLIQEWESLFGIYGLHVGQMLLTRADLDDRERYLNARDMLIALLDNGIIPVVNENDAVATTEIKVGDNDNLSALVGILGGADKLLLLTDQPGLFTADPRNNPDAELIREVHTIDETLRKLAGGSAGGLGTGGMATKLQAADVARRAGIEVIIAAGSRPDVISDLASGESVGTRFLPLDTPLESRKRWILAGPPPAGDIVIDAGAAKAVLERGSSLLSKGISEVKGAFERGEVARIFDTNGVLLARGICRYSSRDMAMIVGKHSQEIYKVLGYEYGPVAIHRDDLVVI</sequence>
<evidence type="ECO:0000255" key="1">
    <source>
        <dbReference type="HAMAP-Rule" id="MF_00456"/>
    </source>
</evidence>